<organism>
    <name type="scientific">Campylobacter jejuni subsp. doylei (strain ATCC BAA-1458 / RM4099 / 269.97)</name>
    <dbReference type="NCBI Taxonomy" id="360109"/>
    <lineage>
        <taxon>Bacteria</taxon>
        <taxon>Pseudomonadati</taxon>
        <taxon>Campylobacterota</taxon>
        <taxon>Epsilonproteobacteria</taxon>
        <taxon>Campylobacterales</taxon>
        <taxon>Campylobacteraceae</taxon>
        <taxon>Campylobacter</taxon>
    </lineage>
</organism>
<reference key="1">
    <citation type="submission" date="2007-07" db="EMBL/GenBank/DDBJ databases">
        <title>Complete genome sequence of Campylobacter jejuni subsp doylei 269.97 isolated from human blood.</title>
        <authorList>
            <person name="Fouts D.E."/>
            <person name="Mongodin E.F."/>
            <person name="Puiu D."/>
            <person name="Sebastian Y."/>
            <person name="Miller W.G."/>
            <person name="Mandrell R.E."/>
            <person name="Lastovica A.J."/>
            <person name="Nelson K.E."/>
        </authorList>
    </citation>
    <scope>NUCLEOTIDE SEQUENCE [LARGE SCALE GENOMIC DNA]</scope>
    <source>
        <strain>ATCC BAA-1458 / RM4099 / 269.97</strain>
    </source>
</reference>
<gene>
    <name evidence="1" type="primary">nadE</name>
    <name type="ordered locus">JJD26997_1200</name>
</gene>
<proteinExistence type="inferred from homology"/>
<keyword id="KW-0067">ATP-binding</keyword>
<keyword id="KW-0436">Ligase</keyword>
<keyword id="KW-0460">Magnesium</keyword>
<keyword id="KW-0479">Metal-binding</keyword>
<keyword id="KW-0520">NAD</keyword>
<keyword id="KW-0547">Nucleotide-binding</keyword>
<accession>A7H439</accession>
<name>NADE_CAMJD</name>
<dbReference type="EC" id="6.3.1.5" evidence="1"/>
<dbReference type="EMBL" id="CP000768">
    <property type="protein sequence ID" value="ABS43563.1"/>
    <property type="molecule type" value="Genomic_DNA"/>
</dbReference>
<dbReference type="SMR" id="A7H439"/>
<dbReference type="KEGG" id="cjd:JJD26997_1200"/>
<dbReference type="HOGENOM" id="CLU_059327_1_2_7"/>
<dbReference type="UniPathway" id="UPA00253">
    <property type="reaction ID" value="UER00333"/>
</dbReference>
<dbReference type="Proteomes" id="UP000002302">
    <property type="component" value="Chromosome"/>
</dbReference>
<dbReference type="GO" id="GO:0005737">
    <property type="term" value="C:cytoplasm"/>
    <property type="evidence" value="ECO:0007669"/>
    <property type="project" value="InterPro"/>
</dbReference>
<dbReference type="GO" id="GO:0005524">
    <property type="term" value="F:ATP binding"/>
    <property type="evidence" value="ECO:0007669"/>
    <property type="project" value="UniProtKB-UniRule"/>
</dbReference>
<dbReference type="GO" id="GO:0004359">
    <property type="term" value="F:glutaminase activity"/>
    <property type="evidence" value="ECO:0007669"/>
    <property type="project" value="InterPro"/>
</dbReference>
<dbReference type="GO" id="GO:0046872">
    <property type="term" value="F:metal ion binding"/>
    <property type="evidence" value="ECO:0007669"/>
    <property type="project" value="UniProtKB-KW"/>
</dbReference>
<dbReference type="GO" id="GO:0003952">
    <property type="term" value="F:NAD+ synthase (glutamine-hydrolyzing) activity"/>
    <property type="evidence" value="ECO:0007669"/>
    <property type="project" value="InterPro"/>
</dbReference>
<dbReference type="GO" id="GO:0008795">
    <property type="term" value="F:NAD+ synthase activity"/>
    <property type="evidence" value="ECO:0007669"/>
    <property type="project" value="UniProtKB-UniRule"/>
</dbReference>
<dbReference type="GO" id="GO:0009435">
    <property type="term" value="P:NAD biosynthetic process"/>
    <property type="evidence" value="ECO:0007669"/>
    <property type="project" value="UniProtKB-UniRule"/>
</dbReference>
<dbReference type="CDD" id="cd00553">
    <property type="entry name" value="NAD_synthase"/>
    <property type="match status" value="1"/>
</dbReference>
<dbReference type="FunFam" id="3.40.50.620:FF:000106">
    <property type="entry name" value="Glutamine-dependent NAD(+) synthetase"/>
    <property type="match status" value="1"/>
</dbReference>
<dbReference type="Gene3D" id="3.40.50.620">
    <property type="entry name" value="HUPs"/>
    <property type="match status" value="1"/>
</dbReference>
<dbReference type="HAMAP" id="MF_00193">
    <property type="entry name" value="NadE_ammonia_dep"/>
    <property type="match status" value="1"/>
</dbReference>
<dbReference type="InterPro" id="IPR022310">
    <property type="entry name" value="NAD/GMP_synthase"/>
</dbReference>
<dbReference type="InterPro" id="IPR003694">
    <property type="entry name" value="NAD_synthase"/>
</dbReference>
<dbReference type="InterPro" id="IPR022926">
    <property type="entry name" value="NH(3)-dep_NAD(+)_synth"/>
</dbReference>
<dbReference type="InterPro" id="IPR014729">
    <property type="entry name" value="Rossmann-like_a/b/a_fold"/>
</dbReference>
<dbReference type="NCBIfam" id="TIGR00552">
    <property type="entry name" value="nadE"/>
    <property type="match status" value="1"/>
</dbReference>
<dbReference type="NCBIfam" id="NF010587">
    <property type="entry name" value="PRK13980.1"/>
    <property type="match status" value="1"/>
</dbReference>
<dbReference type="PANTHER" id="PTHR23090:SF9">
    <property type="entry name" value="GLUTAMINE-DEPENDENT NAD(+) SYNTHETASE"/>
    <property type="match status" value="1"/>
</dbReference>
<dbReference type="PANTHER" id="PTHR23090">
    <property type="entry name" value="NH 3 /GLUTAMINE-DEPENDENT NAD + SYNTHETASE"/>
    <property type="match status" value="1"/>
</dbReference>
<dbReference type="Pfam" id="PF02540">
    <property type="entry name" value="NAD_synthase"/>
    <property type="match status" value="1"/>
</dbReference>
<dbReference type="SUPFAM" id="SSF52402">
    <property type="entry name" value="Adenine nucleotide alpha hydrolases-like"/>
    <property type="match status" value="1"/>
</dbReference>
<sequence>MDWQKITEKMCDFIQEKVKNSQSQGVVLGLSGGIDSALVATLCKRALKENVFAFLMPTQISNKTNLEDALRLCVDLNLEYKIIEIQSILDAFIKQSENTTLVSLGNFAARIRMSLLYDYSAMKNSLVIGTSNKSELLLGYGTIYGDLAYAFNPIGSLYKSEIYALAKYLNLHENFIKKTPSADLWENQTDEADLGFSYAKIDEGLKALETNDEKLLKILDPSLIAMLKNRMQKNAFKGKMPEILEI</sequence>
<comment type="function">
    <text evidence="1">Catalyzes the ATP-dependent amidation of deamido-NAD to form NAD. Uses ammonia as a nitrogen source.</text>
</comment>
<comment type="catalytic activity">
    <reaction evidence="1">
        <text>deamido-NAD(+) + NH4(+) + ATP = AMP + diphosphate + NAD(+) + H(+)</text>
        <dbReference type="Rhea" id="RHEA:21188"/>
        <dbReference type="ChEBI" id="CHEBI:15378"/>
        <dbReference type="ChEBI" id="CHEBI:28938"/>
        <dbReference type="ChEBI" id="CHEBI:30616"/>
        <dbReference type="ChEBI" id="CHEBI:33019"/>
        <dbReference type="ChEBI" id="CHEBI:57540"/>
        <dbReference type="ChEBI" id="CHEBI:58437"/>
        <dbReference type="ChEBI" id="CHEBI:456215"/>
        <dbReference type="EC" id="6.3.1.5"/>
    </reaction>
</comment>
<comment type="pathway">
    <text evidence="1">Cofactor biosynthesis; NAD(+) biosynthesis; NAD(+) from deamido-NAD(+) (ammonia route): step 1/1.</text>
</comment>
<comment type="subunit">
    <text evidence="1">Homodimer.</text>
</comment>
<comment type="similarity">
    <text evidence="1">Belongs to the NAD synthetase family.</text>
</comment>
<protein>
    <recommendedName>
        <fullName evidence="1">NH(3)-dependent NAD(+) synthetase</fullName>
        <ecNumber evidence="1">6.3.1.5</ecNumber>
    </recommendedName>
</protein>
<evidence type="ECO:0000255" key="1">
    <source>
        <dbReference type="HAMAP-Rule" id="MF_00193"/>
    </source>
</evidence>
<feature type="chain" id="PRO_1000077541" description="NH(3)-dependent NAD(+) synthetase">
    <location>
        <begin position="1"/>
        <end position="246"/>
    </location>
</feature>
<feature type="binding site" evidence="1">
    <location>
        <begin position="29"/>
        <end position="36"/>
    </location>
    <ligand>
        <name>ATP</name>
        <dbReference type="ChEBI" id="CHEBI:30616"/>
    </ligand>
</feature>
<feature type="binding site" evidence="1">
    <location>
        <position position="35"/>
    </location>
    <ligand>
        <name>Mg(2+)</name>
        <dbReference type="ChEBI" id="CHEBI:18420"/>
    </ligand>
</feature>
<feature type="binding site" evidence="1">
    <location>
        <position position="110"/>
    </location>
    <ligand>
        <name>deamido-NAD(+)</name>
        <dbReference type="ChEBI" id="CHEBI:58437"/>
    </ligand>
</feature>
<feature type="binding site" evidence="1">
    <location>
        <position position="130"/>
    </location>
    <ligand>
        <name>ATP</name>
        <dbReference type="ChEBI" id="CHEBI:30616"/>
    </ligand>
</feature>
<feature type="binding site" evidence="1">
    <location>
        <position position="135"/>
    </location>
    <ligand>
        <name>Mg(2+)</name>
        <dbReference type="ChEBI" id="CHEBI:18420"/>
    </ligand>
</feature>
<feature type="binding site" evidence="1">
    <location>
        <position position="159"/>
    </location>
    <ligand>
        <name>ATP</name>
        <dbReference type="ChEBI" id="CHEBI:30616"/>
    </ligand>
</feature>
<feature type="binding site" evidence="1">
    <location>
        <position position="181"/>
    </location>
    <ligand>
        <name>ATP</name>
        <dbReference type="ChEBI" id="CHEBI:30616"/>
    </ligand>
</feature>